<gene>
    <name evidence="1" type="primary">pagP</name>
    <name type="synonym">crcA</name>
    <name type="ordered locus">YPTS_1744</name>
</gene>
<accession>B2K0E2</accession>
<dbReference type="EC" id="2.3.1.251" evidence="1"/>
<dbReference type="EMBL" id="CP001048">
    <property type="protein sequence ID" value="ACC88711.1"/>
    <property type="molecule type" value="Genomic_DNA"/>
</dbReference>
<dbReference type="RefSeq" id="WP_011192143.1">
    <property type="nucleotide sequence ID" value="NZ_CP009780.1"/>
</dbReference>
<dbReference type="SMR" id="B2K0E2"/>
<dbReference type="GeneID" id="49786303"/>
<dbReference type="KEGG" id="ypb:YPTS_1744"/>
<dbReference type="PATRIC" id="fig|502801.10.peg.1121"/>
<dbReference type="GO" id="GO:0009279">
    <property type="term" value="C:cell outer membrane"/>
    <property type="evidence" value="ECO:0000250"/>
    <property type="project" value="UniProtKB"/>
</dbReference>
<dbReference type="GO" id="GO:0016416">
    <property type="term" value="F:O-palmitoyltransferase activity"/>
    <property type="evidence" value="ECO:0000250"/>
    <property type="project" value="UniProtKB"/>
</dbReference>
<dbReference type="GO" id="GO:0009245">
    <property type="term" value="P:lipid A biosynthetic process"/>
    <property type="evidence" value="ECO:0000250"/>
    <property type="project" value="UniProtKB"/>
</dbReference>
<dbReference type="FunFam" id="2.40.160.20:FF:000002">
    <property type="entry name" value="Lipid A palmitoyltransferase PagP"/>
    <property type="match status" value="1"/>
</dbReference>
<dbReference type="Gene3D" id="2.40.160.20">
    <property type="match status" value="1"/>
</dbReference>
<dbReference type="HAMAP" id="MF_00837">
    <property type="entry name" value="PagP_transferase"/>
    <property type="match status" value="1"/>
</dbReference>
<dbReference type="InterPro" id="IPR009746">
    <property type="entry name" value="LipidA_acyl_PagP"/>
</dbReference>
<dbReference type="InterPro" id="IPR011250">
    <property type="entry name" value="OMP/PagP_b-brl"/>
</dbReference>
<dbReference type="NCBIfam" id="NF008271">
    <property type="entry name" value="PRK11045.1"/>
    <property type="match status" value="1"/>
</dbReference>
<dbReference type="Pfam" id="PF07017">
    <property type="entry name" value="PagP"/>
    <property type="match status" value="1"/>
</dbReference>
<dbReference type="SUPFAM" id="SSF56925">
    <property type="entry name" value="OMPA-like"/>
    <property type="match status" value="1"/>
</dbReference>
<protein>
    <recommendedName>
        <fullName evidence="1">Lipid A acyltransferase PagP</fullName>
        <ecNumber evidence="1">2.3.1.251</ecNumber>
    </recommendedName>
    <alternativeName>
        <fullName evidence="1">Lipid A acylation protein</fullName>
    </alternativeName>
</protein>
<reference key="1">
    <citation type="submission" date="2008-04" db="EMBL/GenBank/DDBJ databases">
        <title>Complete sequence of Yersinia pseudotuberculosis PB1/+.</title>
        <authorList>
            <person name="Copeland A."/>
            <person name="Lucas S."/>
            <person name="Lapidus A."/>
            <person name="Glavina del Rio T."/>
            <person name="Dalin E."/>
            <person name="Tice H."/>
            <person name="Bruce D."/>
            <person name="Goodwin L."/>
            <person name="Pitluck S."/>
            <person name="Munk A.C."/>
            <person name="Brettin T."/>
            <person name="Detter J.C."/>
            <person name="Han C."/>
            <person name="Tapia R."/>
            <person name="Schmutz J."/>
            <person name="Larimer F."/>
            <person name="Land M."/>
            <person name="Hauser L."/>
            <person name="Challacombe J.F."/>
            <person name="Green L."/>
            <person name="Lindler L.E."/>
            <person name="Nikolich M.P."/>
            <person name="Richardson P."/>
        </authorList>
    </citation>
    <scope>NUCLEOTIDE SEQUENCE [LARGE SCALE GENOMIC DNA]</scope>
    <source>
        <strain>PB1/+</strain>
    </source>
</reference>
<name>PAGP_YERPB</name>
<feature type="signal peptide" evidence="1">
    <location>
        <begin position="1"/>
        <end position="25"/>
    </location>
</feature>
<feature type="chain" id="PRO_5000345389" description="Lipid A acyltransferase PagP">
    <location>
        <begin position="26"/>
        <end position="202"/>
    </location>
</feature>
<feature type="active site" evidence="1">
    <location>
        <position position="74"/>
    </location>
</feature>
<feature type="active site" evidence="1">
    <location>
        <position position="117"/>
    </location>
</feature>
<feature type="active site" evidence="1">
    <location>
        <position position="118"/>
    </location>
</feature>
<feature type="site" description="Role in lipopolysaccharide recognition" evidence="1">
    <location>
        <position position="83"/>
    </location>
</feature>
<feature type="site" description="Role in the phospholipid gating" evidence="1">
    <location>
        <position position="188"/>
    </location>
</feature>
<comment type="function">
    <text evidence="1">Transfers a fatty acid residue from the sn-1 position of a phospholipid to the N-linked hydroxyfatty acid chain on the proximal unit of lipid A or its precursors.</text>
</comment>
<comment type="catalytic activity">
    <reaction evidence="1">
        <text>a lipid A + a 1,2-diacyl-sn-glycero-3-phosphocholine = a hepta-acyl lipid A + a 2-acyl-sn-glycero-3-phosphocholine</text>
        <dbReference type="Rhea" id="RHEA:74275"/>
        <dbReference type="ChEBI" id="CHEBI:57643"/>
        <dbReference type="ChEBI" id="CHEBI:57875"/>
        <dbReference type="ChEBI" id="CHEBI:193141"/>
        <dbReference type="ChEBI" id="CHEBI:193142"/>
        <dbReference type="EC" id="2.3.1.251"/>
    </reaction>
</comment>
<comment type="catalytic activity">
    <reaction evidence="1">
        <text>a lipid IVA + a 1,2-diacyl-sn-glycero-3-phosphocholine = a lipid IVB + a 2-acyl-sn-glycero-3-phosphocholine</text>
        <dbReference type="Rhea" id="RHEA:74279"/>
        <dbReference type="ChEBI" id="CHEBI:57643"/>
        <dbReference type="ChEBI" id="CHEBI:57875"/>
        <dbReference type="ChEBI" id="CHEBI:176425"/>
        <dbReference type="ChEBI" id="CHEBI:193143"/>
        <dbReference type="EC" id="2.3.1.251"/>
    </reaction>
</comment>
<comment type="catalytic activity">
    <reaction evidence="1">
        <text>a lipid IIA + a 1,2-diacyl-sn-glycero-3-phosphocholine = a lipid IIB + a 2-acyl-sn-glycero-3-phosphocholine</text>
        <dbReference type="Rhea" id="RHEA:74283"/>
        <dbReference type="ChEBI" id="CHEBI:57643"/>
        <dbReference type="ChEBI" id="CHEBI:57875"/>
        <dbReference type="ChEBI" id="CHEBI:193144"/>
        <dbReference type="ChEBI" id="CHEBI:193145"/>
        <dbReference type="EC" id="2.3.1.251"/>
    </reaction>
</comment>
<comment type="subunit">
    <text evidence="1">Homodimer.</text>
</comment>
<comment type="subcellular location">
    <subcellularLocation>
        <location evidence="1">Cell outer membrane</location>
    </subcellularLocation>
</comment>
<comment type="similarity">
    <text evidence="1 2">Belongs to the lipid A palmitoyltransferase family.</text>
</comment>
<organism>
    <name type="scientific">Yersinia pseudotuberculosis serotype IB (strain PB1/+)</name>
    <dbReference type="NCBI Taxonomy" id="502801"/>
    <lineage>
        <taxon>Bacteria</taxon>
        <taxon>Pseudomonadati</taxon>
        <taxon>Pseudomonadota</taxon>
        <taxon>Gammaproteobacteria</taxon>
        <taxon>Enterobacterales</taxon>
        <taxon>Yersiniaceae</taxon>
        <taxon>Yersinia</taxon>
    </lineage>
</organism>
<proteinExistence type="inferred from homology"/>
<sequence length="202" mass="23518">MNYKDIINACILSGVFLLHSPSALADTPSVGVSKGQESLQPAAEGNLWQRLIRNVSLAWNSPHQELYIPVNTWHNRWTYDDEKIASYNERPWGVGYGKYRYDEDNNWHSVYAMAFMDSHNRVEPILGYGYQKMWIPGEREGWRFGAGFTASITARYEYHYIPLPLPLPLISIEYNRLSLQTTYIPGTYNNGNVLFTWIRWQF</sequence>
<keyword id="KW-0012">Acyltransferase</keyword>
<keyword id="KW-0998">Cell outer membrane</keyword>
<keyword id="KW-0472">Membrane</keyword>
<keyword id="KW-0732">Signal</keyword>
<keyword id="KW-0808">Transferase</keyword>
<evidence type="ECO:0000255" key="1">
    <source>
        <dbReference type="HAMAP-Rule" id="MF_00837"/>
    </source>
</evidence>
<evidence type="ECO:0000305" key="2"/>